<proteinExistence type="evidence at protein level"/>
<reference key="1">
    <citation type="journal article" date="1994" name="DNA Res.">
        <title>Systematic sequencing of the 180 kilobase region of the Bacillus subtilis chromosome containing the replication origin.</title>
        <authorList>
            <person name="Ogasawara N."/>
            <person name="Nakai S."/>
            <person name="Yoshikawa H."/>
        </authorList>
    </citation>
    <scope>NUCLEOTIDE SEQUENCE [GENOMIC DNA]</scope>
    <source>
        <strain>168</strain>
    </source>
</reference>
<reference key="2">
    <citation type="journal article" date="1997" name="Nature">
        <title>The complete genome sequence of the Gram-positive bacterium Bacillus subtilis.</title>
        <authorList>
            <person name="Kunst F."/>
            <person name="Ogasawara N."/>
            <person name="Moszer I."/>
            <person name="Albertini A.M."/>
            <person name="Alloni G."/>
            <person name="Azevedo V."/>
            <person name="Bertero M.G."/>
            <person name="Bessieres P."/>
            <person name="Bolotin A."/>
            <person name="Borchert S."/>
            <person name="Borriss R."/>
            <person name="Boursier L."/>
            <person name="Brans A."/>
            <person name="Braun M."/>
            <person name="Brignell S.C."/>
            <person name="Bron S."/>
            <person name="Brouillet S."/>
            <person name="Bruschi C.V."/>
            <person name="Caldwell B."/>
            <person name="Capuano V."/>
            <person name="Carter N.M."/>
            <person name="Choi S.-K."/>
            <person name="Codani J.-J."/>
            <person name="Connerton I.F."/>
            <person name="Cummings N.J."/>
            <person name="Daniel R.A."/>
            <person name="Denizot F."/>
            <person name="Devine K.M."/>
            <person name="Duesterhoeft A."/>
            <person name="Ehrlich S.D."/>
            <person name="Emmerson P.T."/>
            <person name="Entian K.-D."/>
            <person name="Errington J."/>
            <person name="Fabret C."/>
            <person name="Ferrari E."/>
            <person name="Foulger D."/>
            <person name="Fritz C."/>
            <person name="Fujita M."/>
            <person name="Fujita Y."/>
            <person name="Fuma S."/>
            <person name="Galizzi A."/>
            <person name="Galleron N."/>
            <person name="Ghim S.-Y."/>
            <person name="Glaser P."/>
            <person name="Goffeau A."/>
            <person name="Golightly E.J."/>
            <person name="Grandi G."/>
            <person name="Guiseppi G."/>
            <person name="Guy B.J."/>
            <person name="Haga K."/>
            <person name="Haiech J."/>
            <person name="Harwood C.R."/>
            <person name="Henaut A."/>
            <person name="Hilbert H."/>
            <person name="Holsappel S."/>
            <person name="Hosono S."/>
            <person name="Hullo M.-F."/>
            <person name="Itaya M."/>
            <person name="Jones L.-M."/>
            <person name="Joris B."/>
            <person name="Karamata D."/>
            <person name="Kasahara Y."/>
            <person name="Klaerr-Blanchard M."/>
            <person name="Klein C."/>
            <person name="Kobayashi Y."/>
            <person name="Koetter P."/>
            <person name="Koningstein G."/>
            <person name="Krogh S."/>
            <person name="Kumano M."/>
            <person name="Kurita K."/>
            <person name="Lapidus A."/>
            <person name="Lardinois S."/>
            <person name="Lauber J."/>
            <person name="Lazarevic V."/>
            <person name="Lee S.-M."/>
            <person name="Levine A."/>
            <person name="Liu H."/>
            <person name="Masuda S."/>
            <person name="Mauel C."/>
            <person name="Medigue C."/>
            <person name="Medina N."/>
            <person name="Mellado R.P."/>
            <person name="Mizuno M."/>
            <person name="Moestl D."/>
            <person name="Nakai S."/>
            <person name="Noback M."/>
            <person name="Noone D."/>
            <person name="O'Reilly M."/>
            <person name="Ogawa K."/>
            <person name="Ogiwara A."/>
            <person name="Oudega B."/>
            <person name="Park S.-H."/>
            <person name="Parro V."/>
            <person name="Pohl T.M."/>
            <person name="Portetelle D."/>
            <person name="Porwollik S."/>
            <person name="Prescott A.M."/>
            <person name="Presecan E."/>
            <person name="Pujic P."/>
            <person name="Purnelle B."/>
            <person name="Rapoport G."/>
            <person name="Rey M."/>
            <person name="Reynolds S."/>
            <person name="Rieger M."/>
            <person name="Rivolta C."/>
            <person name="Rocha E."/>
            <person name="Roche B."/>
            <person name="Rose M."/>
            <person name="Sadaie Y."/>
            <person name="Sato T."/>
            <person name="Scanlan E."/>
            <person name="Schleich S."/>
            <person name="Schroeter R."/>
            <person name="Scoffone F."/>
            <person name="Sekiguchi J."/>
            <person name="Sekowska A."/>
            <person name="Seror S.J."/>
            <person name="Serror P."/>
            <person name="Shin B.-S."/>
            <person name="Soldo B."/>
            <person name="Sorokin A."/>
            <person name="Tacconi E."/>
            <person name="Takagi T."/>
            <person name="Takahashi H."/>
            <person name="Takemaru K."/>
            <person name="Takeuchi M."/>
            <person name="Tamakoshi A."/>
            <person name="Tanaka T."/>
            <person name="Terpstra P."/>
            <person name="Tognoni A."/>
            <person name="Tosato V."/>
            <person name="Uchiyama S."/>
            <person name="Vandenbol M."/>
            <person name="Vannier F."/>
            <person name="Vassarotti A."/>
            <person name="Viari A."/>
            <person name="Wambutt R."/>
            <person name="Wedler E."/>
            <person name="Wedler H."/>
            <person name="Weitzenegger T."/>
            <person name="Winters P."/>
            <person name="Wipat A."/>
            <person name="Yamamoto H."/>
            <person name="Yamane K."/>
            <person name="Yasumoto K."/>
            <person name="Yata K."/>
            <person name="Yoshida K."/>
            <person name="Yoshikawa H.-F."/>
            <person name="Zumstein E."/>
            <person name="Yoshikawa H."/>
            <person name="Danchin A."/>
        </authorList>
    </citation>
    <scope>NUCLEOTIDE SEQUENCE [LARGE SCALE GENOMIC DNA]</scope>
    <source>
        <strain>168</strain>
    </source>
</reference>
<reference key="3">
    <citation type="journal article" date="1995" name="Proc. Natl. Acad. Sci. U.S.A.">
        <title>Identification of the Bacillus subtilis pur operon repressor.</title>
        <authorList>
            <person name="Weng M."/>
            <person name="Nagy P.L."/>
            <person name="Zalkin H."/>
        </authorList>
    </citation>
    <scope>PROTEIN SEQUENCE OF 1-25</scope>
    <scope>FUNCTION</scope>
    <scope>DNA-BINDING</scope>
    <scope>ACTIVITY REGULATION</scope>
    <scope>SUBUNIT</scope>
    <scope>INDUCTION</scope>
    <source>
        <strain>DE1</strain>
    </source>
</reference>
<reference key="4">
    <citation type="journal article" date="1997" name="J. Bacteriol.">
        <title>Interaction of Bacillus subtilis purine repressor with DNA.</title>
        <authorList>
            <person name="Shin B.S."/>
            <person name="Stein A."/>
            <person name="Zalkin H."/>
        </authorList>
    </citation>
    <scope>FUNCTION</scope>
    <scope>DNA-BINDING</scope>
    <scope>SUBUNIT</scope>
</reference>
<reference key="5">
    <citation type="journal article" date="2000" name="Curr. Microbiol.">
        <title>Mutations in the Bacillus subtilis purine repressor that perturb PRPP effector function in vitro and in vivo.</title>
        <authorList>
            <person name="Weng M."/>
            <person name="Zalkin H."/>
        </authorList>
    </citation>
    <scope>FUNCTION</scope>
    <scope>DNA-BINDING</scope>
    <scope>ACTIVITY REGULATION</scope>
    <scope>MUTAGENESIS OF ASP-203 AND ASP-204</scope>
    <source>
        <strain>MWRCZ</strain>
    </source>
</reference>
<reference key="6">
    <citation type="journal article" date="2001" name="J. Bacteriol.">
        <title>Definition of the Bacillus subtilis PurR operator using genetic and bioinformatic tools and expansion of the PurR regulon with glyA, guaC, pbuG, xpt-pbuX, yqhZ-folD, and pbuO.</title>
        <authorList>
            <person name="Saxild H.H."/>
            <person name="Brunstedt K."/>
            <person name="Nielsen K.I."/>
            <person name="Jarmer H."/>
            <person name="Nygaard P."/>
        </authorList>
    </citation>
    <scope>FUNCTION</scope>
    <scope>DNA-BINDING</scope>
    <source>
        <strain>168</strain>
    </source>
</reference>
<reference key="7">
    <citation type="journal article" date="2005" name="Curr. Microbiol.">
        <title>Mutational analysis of the Bacillus subtilis purA operator site.</title>
        <authorList>
            <person name="Rappu P."/>
            <person name="Leppihalme M."/>
            <person name="Maentsaelae P."/>
        </authorList>
    </citation>
    <scope>FUNCTION</scope>
    <scope>DNA-BINDING</scope>
</reference>
<reference evidence="14" key="8">
    <citation type="journal article" date="2003" name="J. Bacteriol.">
        <title>The purine repressor of Bacillus subtilis: a novel combination of domains adapted for transcription regulation.</title>
        <authorList>
            <person name="Sinha S.C."/>
            <person name="Krahn J."/>
            <person name="Shin B.S."/>
            <person name="Tomchick D.R."/>
            <person name="Zalkin H."/>
            <person name="Smith J.L."/>
        </authorList>
    </citation>
    <scope>X-RAY CRYSTALLOGRAPHY (2.20 ANGSTROMS)</scope>
    <scope>SUBUNIT</scope>
    <scope>DOMAIN</scope>
</reference>
<reference evidence="15" key="9">
    <citation type="journal article" date="2003" name="J. Bacteriol.">
        <title>Functional dissection of the Bacillus subtilis pur operator site.</title>
        <authorList>
            <person name="Bera A.K."/>
            <person name="Zhu J."/>
            <person name="Zalkin H."/>
            <person name="Smith J.L."/>
        </authorList>
    </citation>
    <scope>X-RAY CRYSTALLOGRAPHY (2.22 ANGSTROMS) IN COMPLEX WITH CARBOXYLIC PRPP</scope>
    <scope>FUNCTION</scope>
    <scope>DNA-BINDING</scope>
    <scope>ACTIVITY REGULATION</scope>
    <scope>SUBUNIT</scope>
    <scope>DOMAIN</scope>
</reference>
<reference evidence="16" key="10">
    <citation type="journal article" date="2022" name="Nucleic Acids Res.">
        <title>The nucleotide messenger (p)ppGpp is an anti-inducer of the purine synthesis transcription regulator PurR in Bacillus.</title>
        <authorList>
            <person name="Anderson B.W."/>
            <person name="Schumacher M.A."/>
            <person name="Yang J."/>
            <person name="Turdiev A."/>
            <person name="Turdiev H."/>
            <person name="Schroeder J.W."/>
            <person name="He Q."/>
            <person name="Lee V.T."/>
            <person name="Brennan R.G."/>
            <person name="Wang J.D."/>
        </authorList>
    </citation>
    <scope>X-RAY CRYSTALLOGRAPHY (2.45 ANGSTROMS) IN COMPLEX WITH GUANOSINE-5',3'-TETRAPHOSPHATE</scope>
    <scope>FUNCTION</scope>
    <scope>DNA-BINDING</scope>
    <scope>ACTIVITY REGULATION</scope>
    <scope>SUBUNIT</scope>
    <scope>DOMAIN</scope>
    <scope>MUTAGENESIS OF TYR-102</scope>
</reference>
<name>PURR_BACSU</name>
<sequence length="285" mass="31229">MKFRRSGRLVDLTNYLLTHPHELIPLTFFSERYESAKSSISEDLTIIKQTFEQQGIGTLLTVPGAAGGVKYIPKMKQAEAEEFVQTLGQSLANPERILPGGYVYLTDILGKPSVLSKVGKLFASVFAEREIDVVMTVATKGIPLAYAAASYLNVPVVIVRKDNKVTEGSTVSINYVSGSSNRIQTMSLAKRSMKTGSNVLIIDDFMKAGGTINGMINLLDEFNANVAGIGVLVEAEGVDERLVDEYMSLLTLSTINMKEKSIEIQNGNFLRFFKDNLLKNGETES</sequence>
<feature type="chain" id="PRO_0000139699" description="Purine biosynthesis transcriptional repressor PurR">
    <location>
        <begin position="1"/>
        <end position="285"/>
    </location>
</feature>
<feature type="region of interest" description="DNA binding domain" evidence="13">
    <location>
        <begin position="1"/>
        <end position="73"/>
    </location>
</feature>
<feature type="region of interest" description="Effector binding domain" evidence="13">
    <location>
        <begin position="74"/>
        <end position="285"/>
    </location>
</feature>
<feature type="binding site" evidence="16">
    <location>
        <position position="102"/>
    </location>
    <ligand>
        <name>guanosine 3',5'-bis(diphosphate)</name>
        <dbReference type="ChEBI" id="CHEBI:77828"/>
        <note>activator</note>
    </ligand>
</feature>
<feature type="binding site" evidence="12 15">
    <location>
        <position position="138"/>
    </location>
    <ligand>
        <name>5-phospho-alpha-D-ribose 1-diphosphate</name>
        <dbReference type="ChEBI" id="CHEBI:58017"/>
        <note>inhibitor</note>
    </ligand>
</feature>
<feature type="binding site" evidence="12 15">
    <location>
        <position position="139"/>
    </location>
    <ligand>
        <name>5-phospho-alpha-D-ribose 1-diphosphate</name>
        <dbReference type="ChEBI" id="CHEBI:58017"/>
        <note>inhibitor</note>
    </ligand>
</feature>
<feature type="binding site" evidence="12 15">
    <location>
        <position position="140"/>
    </location>
    <ligand>
        <name>5-phospho-alpha-D-ribose 1-diphosphate</name>
        <dbReference type="ChEBI" id="CHEBI:58017"/>
        <note>inhibitor</note>
    </ligand>
</feature>
<feature type="binding site" evidence="12 15">
    <location>
        <position position="160"/>
    </location>
    <ligand>
        <name>5-phospho-alpha-D-ribose 1-diphosphate</name>
        <dbReference type="ChEBI" id="CHEBI:58017"/>
        <note>inhibitor</note>
    </ligand>
</feature>
<feature type="binding site" description="covalent" evidence="16">
    <location>
        <position position="178"/>
    </location>
    <ligand>
        <name>guanosine 3',5'-bis(diphosphate)</name>
        <dbReference type="ChEBI" id="CHEBI:77828"/>
        <note>activator</note>
    </ligand>
</feature>
<feature type="binding site" evidence="16">
    <location>
        <position position="179"/>
    </location>
    <ligand>
        <name>guanosine 3',5'-bis(diphosphate)</name>
        <dbReference type="ChEBI" id="CHEBI:77828"/>
        <note>activator</note>
    </ligand>
</feature>
<feature type="binding site" evidence="12 15">
    <location>
        <position position="203"/>
    </location>
    <ligand>
        <name>5-phospho-alpha-D-ribose 1-diphosphate</name>
        <dbReference type="ChEBI" id="CHEBI:58017"/>
        <note>inhibitor</note>
    </ligand>
</feature>
<feature type="binding site" evidence="12 15">
    <location>
        <position position="204"/>
    </location>
    <ligand>
        <name>5-phospho-alpha-D-ribose 1-diphosphate</name>
        <dbReference type="ChEBI" id="CHEBI:58017"/>
        <note>inhibitor</note>
    </ligand>
</feature>
<feature type="binding site" evidence="12 15">
    <location>
        <position position="205"/>
    </location>
    <ligand>
        <name>5-phospho-alpha-D-ribose 1-diphosphate</name>
        <dbReference type="ChEBI" id="CHEBI:58017"/>
        <note>inhibitor</note>
    </ligand>
</feature>
<feature type="binding site" evidence="12 15">
    <location>
        <position position="207"/>
    </location>
    <ligand>
        <name>5-phospho-alpha-D-ribose 1-diphosphate</name>
        <dbReference type="ChEBI" id="CHEBI:58017"/>
        <note>inhibitor</note>
    </ligand>
</feature>
<feature type="binding site" evidence="16">
    <location>
        <position position="207"/>
    </location>
    <ligand>
        <name>guanosine 3',5'-bis(diphosphate)</name>
        <dbReference type="ChEBI" id="CHEBI:77828"/>
        <note>activator</note>
    </ligand>
</feature>
<feature type="binding site" evidence="12 15">
    <location>
        <position position="208"/>
    </location>
    <ligand>
        <name>5-phospho-alpha-D-ribose 1-diphosphate</name>
        <dbReference type="ChEBI" id="CHEBI:58017"/>
        <note>inhibitor</note>
    </ligand>
</feature>
<feature type="binding site" evidence="16">
    <location>
        <position position="209"/>
    </location>
    <ligand>
        <name>guanosine 3',5'-bis(diphosphate)</name>
        <dbReference type="ChEBI" id="CHEBI:77828"/>
        <note>activator</note>
    </ligand>
</feature>
<feature type="binding site" evidence="16">
    <location>
        <position position="210"/>
    </location>
    <ligand>
        <name>guanosine 3',5'-bis(diphosphate)</name>
        <dbReference type="ChEBI" id="CHEBI:77828"/>
        <note>activator</note>
    </ligand>
</feature>
<feature type="binding site" evidence="12 15">
    <location>
        <position position="211"/>
    </location>
    <ligand>
        <name>5-phospho-alpha-D-ribose 1-diphosphate</name>
        <dbReference type="ChEBI" id="CHEBI:58017"/>
        <note>inhibitor</note>
    </ligand>
</feature>
<feature type="binding site" evidence="16">
    <location>
        <position position="211"/>
    </location>
    <ligand>
        <name>guanosine 3',5'-bis(diphosphate)</name>
        <dbReference type="ChEBI" id="CHEBI:77828"/>
        <note>activator</note>
    </ligand>
</feature>
<feature type="mutagenesis site" description="Decreases interaction with ppGpp." evidence="6">
    <original>Y</original>
    <variation>A</variation>
    <location>
        <position position="102"/>
    </location>
</feature>
<feature type="mutagenesis site" description="Reduces the affinity for binding to pur operon control site DNA and abolishes the capacity of PRPP to inhibit binding of PurR to DNA in vitro." evidence="1">
    <original>D</original>
    <variation>A</variation>
    <location>
        <position position="203"/>
    </location>
</feature>
<feature type="mutagenesis site" description="Reduces the affinity for binding to pur operon control site DNA and abolishes the capacity of PRPP to inhibit binding of PurR to DNA in vitro." evidence="1">
    <original>D</original>
    <variation>A</variation>
    <location>
        <position position="204"/>
    </location>
</feature>
<feature type="helix" evidence="17">
    <location>
        <begin position="5"/>
        <end position="17"/>
    </location>
</feature>
<feature type="helix" evidence="17">
    <location>
        <begin position="26"/>
        <end position="32"/>
    </location>
</feature>
<feature type="helix" evidence="17">
    <location>
        <begin position="37"/>
        <end position="53"/>
    </location>
</feature>
<feature type="strand" evidence="17">
    <location>
        <begin position="56"/>
        <end position="62"/>
    </location>
</feature>
<feature type="strand" evidence="17">
    <location>
        <begin position="68"/>
        <end position="73"/>
    </location>
</feature>
<feature type="helix" evidence="17">
    <location>
        <begin position="77"/>
        <end position="91"/>
    </location>
</feature>
<feature type="helix" evidence="17">
    <location>
        <begin position="94"/>
        <end position="96"/>
    </location>
</feature>
<feature type="turn" evidence="17">
    <location>
        <begin position="99"/>
        <end position="101"/>
    </location>
</feature>
<feature type="turn" evidence="17">
    <location>
        <begin position="106"/>
        <end position="110"/>
    </location>
</feature>
<feature type="helix" evidence="17">
    <location>
        <begin position="112"/>
        <end position="125"/>
    </location>
</feature>
<feature type="turn" evidence="17">
    <location>
        <begin position="126"/>
        <end position="128"/>
    </location>
</feature>
<feature type="strand" evidence="17">
    <location>
        <begin position="132"/>
        <end position="137"/>
    </location>
</feature>
<feature type="turn" evidence="17">
    <location>
        <begin position="138"/>
        <end position="141"/>
    </location>
</feature>
<feature type="helix" evidence="17">
    <location>
        <begin position="142"/>
        <end position="152"/>
    </location>
</feature>
<feature type="strand" evidence="17">
    <location>
        <begin position="156"/>
        <end position="160"/>
    </location>
</feature>
<feature type="strand" evidence="17">
    <location>
        <begin position="170"/>
        <end position="176"/>
    </location>
</feature>
<feature type="strand" evidence="18">
    <location>
        <begin position="178"/>
        <end position="180"/>
    </location>
</feature>
<feature type="strand" evidence="17">
    <location>
        <begin position="182"/>
        <end position="189"/>
    </location>
</feature>
<feature type="helix" evidence="17">
    <location>
        <begin position="190"/>
        <end position="192"/>
    </location>
</feature>
<feature type="strand" evidence="17">
    <location>
        <begin position="198"/>
        <end position="209"/>
    </location>
</feature>
<feature type="helix" evidence="17">
    <location>
        <begin position="210"/>
        <end position="218"/>
    </location>
</feature>
<feature type="helix" evidence="17">
    <location>
        <begin position="220"/>
        <end position="222"/>
    </location>
</feature>
<feature type="strand" evidence="17">
    <location>
        <begin position="225"/>
        <end position="237"/>
    </location>
</feature>
<feature type="strand" evidence="17">
    <location>
        <begin position="247"/>
        <end position="253"/>
    </location>
</feature>
<feature type="strand" evidence="17">
    <location>
        <begin position="257"/>
        <end position="260"/>
    </location>
</feature>
<feature type="strand" evidence="17">
    <location>
        <begin position="263"/>
        <end position="266"/>
    </location>
</feature>
<feature type="helix" evidence="17">
    <location>
        <begin position="269"/>
        <end position="272"/>
    </location>
</feature>
<comment type="function">
    <text evidence="1 2 4 5 6 7 8">DNA-binding transcriptional repressor that controls the expression of a number of genes involved in the synthesis, metabolism and transport of purines (PubMed:10919400, PubMed:11591660, PubMed:34967415, PubMed:7638212). In response to a signal of excess adenine, represses the transcription of the pur operon, which encodes enzymes of the purine biosynthetic pathway (PubMed:10919400, PubMed:7638212). It also represses the expression of the purA and purR genes (PubMed:16163456, PubMed:7638212). In addition, controls the expression of several other genes or operons, which encode enzymes or transporters playing a role in purine nucleotide metabolism (PubMed:11591660, PubMed:34967415). Acts by binding directly to specific DNA sequences, named PurBoxes, in the upstream control regions of affected genes (PubMed:10919400, PubMed:11591660, PubMed:12837784, PubMed:16163456, PubMed:34967415, PubMed:7638212, PubMed:9393704). Two PurBoxes are required for high-affinity PurR binding (PubMed:12837784, PubMed:16163456). Also responds to amino acid starvation via (p)ppGpp, which strongly increases PurR activity and repression of purine nucleotide biosynthesis genes (PubMed:34967415).</text>
</comment>
<comment type="activity regulation">
    <text evidence="1 4 6 7">The binding of PurR to DNA, and therefore the repressor activity, is influenced by interaction with the effector molecules 5-phosphoribosyl 1-pyrophosphate (PRPP) and (p)ppGpp (PubMed:10919400, PubMed:12837784, PubMed:34967415, PubMed:7638212). PRPP binds to PurR and reduces affinity of PurR for DNA, which inhibits the repressor activity and induces transcription of the target genes (PubMed:10919400, PubMed:12837784, PubMed:34967415, PubMed:7638212). On the contrary, (p)ppGpp enhances binding of PurR to DNA and repression of the transcription (PubMed:34967415). PRPP and (p)ppGpp compete for PurR binding and allosteric control of transcription (PubMed:34967415). ppGpp maintains PurR-DNA interaction and prevents PRPP from de-repressing PurR regulation during conditions that lead to (p)ppGpp induction, such as upon amino acid starvation (PubMed:34967415).</text>
</comment>
<comment type="subunit">
    <text evidence="3 4 6 7 8">Homodimer.</text>
</comment>
<comment type="induction">
    <text evidence="7">Autoregulated.</text>
</comment>
<comment type="domain">
    <text evidence="3 4 6">Contains an N-terminal DNA-binding winged helix-turn-helix domain and a C-terminal regulatory domain (or effector binding domain) resembling phosphoribosyltransferase (PRT) domain (PubMed:12837783, PubMed:12837784, PubMed:34967415). However, the PRT domain lacks enzymatic activity and serves a purely regulatory role by binding effector molecules (PubMed:12837783). The ppGpp binding site partially overlaps the PRPP binding site (PubMed:34967415). Binding of ppGpp significantly alters the electrostatics of the effector binding domain by creating a positively charged channel different from the apo protein (PubMed:34967415). The altered electrostatic surfaces may affect the interactions with the electronegative DNA backbone (PubMed:34967415).</text>
</comment>
<comment type="similarity">
    <text evidence="11">Belongs to the purine/pyrimidine phosphoribosyltransferase family. PurR subfamily.</text>
</comment>
<organism>
    <name type="scientific">Bacillus subtilis (strain 168)</name>
    <dbReference type="NCBI Taxonomy" id="224308"/>
    <lineage>
        <taxon>Bacteria</taxon>
        <taxon>Bacillati</taxon>
        <taxon>Bacillota</taxon>
        <taxon>Bacilli</taxon>
        <taxon>Bacillales</taxon>
        <taxon>Bacillaceae</taxon>
        <taxon>Bacillus</taxon>
    </lineage>
</organism>
<evidence type="ECO:0000269" key="1">
    <source>
    </source>
</evidence>
<evidence type="ECO:0000269" key="2">
    <source>
    </source>
</evidence>
<evidence type="ECO:0000269" key="3">
    <source>
    </source>
</evidence>
<evidence type="ECO:0000269" key="4">
    <source>
    </source>
</evidence>
<evidence type="ECO:0000269" key="5">
    <source>
    </source>
</evidence>
<evidence type="ECO:0000269" key="6">
    <source>
    </source>
</evidence>
<evidence type="ECO:0000269" key="7">
    <source>
    </source>
</evidence>
<evidence type="ECO:0000269" key="8">
    <source>
    </source>
</evidence>
<evidence type="ECO:0000303" key="9">
    <source>
    </source>
</evidence>
<evidence type="ECO:0000303" key="10">
    <source>
    </source>
</evidence>
<evidence type="ECO:0000305" key="11"/>
<evidence type="ECO:0000305" key="12">
    <source>
    </source>
</evidence>
<evidence type="ECO:0000305" key="13">
    <source>
    </source>
</evidence>
<evidence type="ECO:0007744" key="14">
    <source>
        <dbReference type="PDB" id="1O57"/>
    </source>
</evidence>
<evidence type="ECO:0007744" key="15">
    <source>
        <dbReference type="PDB" id="1P4A"/>
    </source>
</evidence>
<evidence type="ECO:0007744" key="16">
    <source>
        <dbReference type="PDB" id="7RMW"/>
    </source>
</evidence>
<evidence type="ECO:0007829" key="17">
    <source>
        <dbReference type="PDB" id="1O57"/>
    </source>
</evidence>
<evidence type="ECO:0007829" key="18">
    <source>
        <dbReference type="PDB" id="7RMW"/>
    </source>
</evidence>
<keyword id="KW-0002">3D-structure</keyword>
<keyword id="KW-0903">Direct protein sequencing</keyword>
<keyword id="KW-0238">DNA-binding</keyword>
<keyword id="KW-1185">Reference proteome</keyword>
<keyword id="KW-0678">Repressor</keyword>
<keyword id="KW-0804">Transcription</keyword>
<keyword id="KW-0805">Transcription regulation</keyword>
<accession>P37551</accession>
<gene>
    <name evidence="9" type="primary">purR</name>
    <name type="synonym">yabI</name>
    <name type="ordered locus">BSU00470</name>
</gene>
<dbReference type="EMBL" id="D26185">
    <property type="protein sequence ID" value="BAA05282.1"/>
    <property type="molecule type" value="Genomic_DNA"/>
</dbReference>
<dbReference type="EMBL" id="AL009126">
    <property type="protein sequence ID" value="CAB11823.1"/>
    <property type="molecule type" value="Genomic_DNA"/>
</dbReference>
<dbReference type="PIR" id="S66076">
    <property type="entry name" value="S66076"/>
</dbReference>
<dbReference type="RefSeq" id="NP_387928.1">
    <property type="nucleotide sequence ID" value="NC_000964.3"/>
</dbReference>
<dbReference type="RefSeq" id="WP_003218342.1">
    <property type="nucleotide sequence ID" value="NZ_OZ025638.1"/>
</dbReference>
<dbReference type="PDB" id="1O57">
    <property type="method" value="X-ray"/>
    <property type="resolution" value="2.20 A"/>
    <property type="chains" value="A/B/C/D=1-285"/>
</dbReference>
<dbReference type="PDB" id="1P4A">
    <property type="method" value="X-ray"/>
    <property type="resolution" value="2.22 A"/>
    <property type="chains" value="A/B/C/D=1-285"/>
</dbReference>
<dbReference type="PDB" id="7RMW">
    <property type="method" value="X-ray"/>
    <property type="resolution" value="2.45 A"/>
    <property type="chains" value="A/B/C/D/E/F=1-285"/>
</dbReference>
<dbReference type="PDBsum" id="1O57"/>
<dbReference type="PDBsum" id="1P4A"/>
<dbReference type="PDBsum" id="7RMW"/>
<dbReference type="SMR" id="P37551"/>
<dbReference type="FunCoup" id="P37551">
    <property type="interactions" value="15"/>
</dbReference>
<dbReference type="STRING" id="224308.BSU00470"/>
<dbReference type="DrugBank" id="DB03942">
    <property type="generic name" value="Carboxylic PRPP"/>
</dbReference>
<dbReference type="PaxDb" id="224308-BSU00470"/>
<dbReference type="EnsemblBacteria" id="CAB11823">
    <property type="protein sequence ID" value="CAB11823"/>
    <property type="gene ID" value="BSU_00470"/>
</dbReference>
<dbReference type="GeneID" id="23678241"/>
<dbReference type="GeneID" id="937000"/>
<dbReference type="KEGG" id="bsu:BSU00470"/>
<dbReference type="PATRIC" id="fig|224308.179.peg.47"/>
<dbReference type="eggNOG" id="COG0503">
    <property type="taxonomic scope" value="Bacteria"/>
</dbReference>
<dbReference type="InParanoid" id="P37551"/>
<dbReference type="OrthoDB" id="4213751at2"/>
<dbReference type="PhylomeDB" id="P37551"/>
<dbReference type="BioCyc" id="BSUB:BSU00470-MONOMER"/>
<dbReference type="EvolutionaryTrace" id="P37551"/>
<dbReference type="PRO" id="PR:P37551"/>
<dbReference type="Proteomes" id="UP000001570">
    <property type="component" value="Chromosome"/>
</dbReference>
<dbReference type="GO" id="GO:0003677">
    <property type="term" value="F:DNA binding"/>
    <property type="evidence" value="ECO:0007669"/>
    <property type="project" value="UniProtKB-KW"/>
</dbReference>
<dbReference type="GO" id="GO:0045892">
    <property type="term" value="P:negative regulation of DNA-templated transcription"/>
    <property type="evidence" value="ECO:0007669"/>
    <property type="project" value="InterPro"/>
</dbReference>
<dbReference type="GO" id="GO:0045982">
    <property type="term" value="P:negative regulation of purine nucleobase metabolic process"/>
    <property type="evidence" value="ECO:0007669"/>
    <property type="project" value="InterPro"/>
</dbReference>
<dbReference type="CDD" id="cd06223">
    <property type="entry name" value="PRTases_typeI"/>
    <property type="match status" value="1"/>
</dbReference>
<dbReference type="Gene3D" id="3.40.50.2020">
    <property type="match status" value="1"/>
</dbReference>
<dbReference type="Gene3D" id="1.10.10.10">
    <property type="entry name" value="Winged helix-like DNA-binding domain superfamily/Winged helix DNA-binding domain"/>
    <property type="match status" value="1"/>
</dbReference>
<dbReference type="InterPro" id="IPR000836">
    <property type="entry name" value="PRibTrfase_dom"/>
</dbReference>
<dbReference type="InterPro" id="IPR029057">
    <property type="entry name" value="PRTase-like"/>
</dbReference>
<dbReference type="InterPro" id="IPR050118">
    <property type="entry name" value="Pur/Pyrimidine_PRTase"/>
</dbReference>
<dbReference type="InterPro" id="IPR015265">
    <property type="entry name" value="PuR_N"/>
</dbReference>
<dbReference type="InterPro" id="IPR010078">
    <property type="entry name" value="PurR_Bsub"/>
</dbReference>
<dbReference type="InterPro" id="IPR036388">
    <property type="entry name" value="WH-like_DNA-bd_sf"/>
</dbReference>
<dbReference type="InterPro" id="IPR036390">
    <property type="entry name" value="WH_DNA-bd_sf"/>
</dbReference>
<dbReference type="NCBIfam" id="TIGR01743">
    <property type="entry name" value="purR_Bsub"/>
    <property type="match status" value="1"/>
</dbReference>
<dbReference type="PANTHER" id="PTHR43864">
    <property type="entry name" value="HYPOXANTHINE/GUANINE PHOSPHORIBOSYLTRANSFERASE"/>
    <property type="match status" value="1"/>
</dbReference>
<dbReference type="PANTHER" id="PTHR43864:SF2">
    <property type="entry name" value="PUR OPERON REPRESSOR"/>
    <property type="match status" value="1"/>
</dbReference>
<dbReference type="Pfam" id="PF00156">
    <property type="entry name" value="Pribosyltran"/>
    <property type="match status" value="1"/>
</dbReference>
<dbReference type="Pfam" id="PF09182">
    <property type="entry name" value="PuR_N"/>
    <property type="match status" value="1"/>
</dbReference>
<dbReference type="SUPFAM" id="SSF53271">
    <property type="entry name" value="PRTase-like"/>
    <property type="match status" value="1"/>
</dbReference>
<dbReference type="SUPFAM" id="SSF46785">
    <property type="entry name" value="Winged helix' DNA-binding domain"/>
    <property type="match status" value="1"/>
</dbReference>
<protein>
    <recommendedName>
        <fullName evidence="11">Purine biosynthesis transcriptional repressor PurR</fullName>
    </recommendedName>
    <alternativeName>
        <fullName evidence="9">Pur operon repressor</fullName>
    </alternativeName>
    <alternativeName>
        <fullName evidence="10">Purine repressor</fullName>
    </alternativeName>
</protein>